<accession>C0M9N3</accession>
<dbReference type="EC" id="6.3.4.3" evidence="1"/>
<dbReference type="EMBL" id="FM204883">
    <property type="protein sequence ID" value="CAW93710.1"/>
    <property type="molecule type" value="Genomic_DNA"/>
</dbReference>
<dbReference type="RefSeq" id="WP_012679495.1">
    <property type="nucleotide sequence ID" value="NC_012471.1"/>
</dbReference>
<dbReference type="SMR" id="C0M9N3"/>
<dbReference type="KEGG" id="seu:SEQ_1075"/>
<dbReference type="HOGENOM" id="CLU_003601_3_3_9"/>
<dbReference type="OrthoDB" id="9761733at2"/>
<dbReference type="UniPathway" id="UPA00193"/>
<dbReference type="Proteomes" id="UP000001365">
    <property type="component" value="Chromosome"/>
</dbReference>
<dbReference type="GO" id="GO:0005524">
    <property type="term" value="F:ATP binding"/>
    <property type="evidence" value="ECO:0007669"/>
    <property type="project" value="UniProtKB-UniRule"/>
</dbReference>
<dbReference type="GO" id="GO:0004329">
    <property type="term" value="F:formate-tetrahydrofolate ligase activity"/>
    <property type="evidence" value="ECO:0007669"/>
    <property type="project" value="UniProtKB-UniRule"/>
</dbReference>
<dbReference type="GO" id="GO:0035999">
    <property type="term" value="P:tetrahydrofolate interconversion"/>
    <property type="evidence" value="ECO:0007669"/>
    <property type="project" value="UniProtKB-UniRule"/>
</dbReference>
<dbReference type="CDD" id="cd00477">
    <property type="entry name" value="FTHFS"/>
    <property type="match status" value="1"/>
</dbReference>
<dbReference type="FunFam" id="3.30.1510.10:FF:000001">
    <property type="entry name" value="Formate--tetrahydrofolate ligase"/>
    <property type="match status" value="1"/>
</dbReference>
<dbReference type="FunFam" id="3.10.410.10:FF:000001">
    <property type="entry name" value="Putative formate--tetrahydrofolate ligase"/>
    <property type="match status" value="1"/>
</dbReference>
<dbReference type="Gene3D" id="3.30.1510.10">
    <property type="entry name" value="Domain 2, N(10)-formyltetrahydrofolate synthetase"/>
    <property type="match status" value="1"/>
</dbReference>
<dbReference type="Gene3D" id="3.10.410.10">
    <property type="entry name" value="Formyltetrahydrofolate synthetase, domain 3"/>
    <property type="match status" value="1"/>
</dbReference>
<dbReference type="Gene3D" id="3.40.50.300">
    <property type="entry name" value="P-loop containing nucleotide triphosphate hydrolases"/>
    <property type="match status" value="1"/>
</dbReference>
<dbReference type="HAMAP" id="MF_01543">
    <property type="entry name" value="FTHFS"/>
    <property type="match status" value="1"/>
</dbReference>
<dbReference type="InterPro" id="IPR000559">
    <property type="entry name" value="Formate_THF_ligase"/>
</dbReference>
<dbReference type="InterPro" id="IPR020628">
    <property type="entry name" value="Formate_THF_ligase_CS"/>
</dbReference>
<dbReference type="InterPro" id="IPR027417">
    <property type="entry name" value="P-loop_NTPase"/>
</dbReference>
<dbReference type="NCBIfam" id="NF010030">
    <property type="entry name" value="PRK13505.1"/>
    <property type="match status" value="1"/>
</dbReference>
<dbReference type="Pfam" id="PF01268">
    <property type="entry name" value="FTHFS"/>
    <property type="match status" value="1"/>
</dbReference>
<dbReference type="SUPFAM" id="SSF52540">
    <property type="entry name" value="P-loop containing nucleoside triphosphate hydrolases"/>
    <property type="match status" value="1"/>
</dbReference>
<dbReference type="PROSITE" id="PS00721">
    <property type="entry name" value="FTHFS_1"/>
    <property type="match status" value="1"/>
</dbReference>
<dbReference type="PROSITE" id="PS00722">
    <property type="entry name" value="FTHFS_2"/>
    <property type="match status" value="1"/>
</dbReference>
<feature type="chain" id="PRO_1000185264" description="Formate--tetrahydrofolate ligase">
    <location>
        <begin position="1"/>
        <end position="556"/>
    </location>
</feature>
<feature type="binding site" evidence="1">
    <location>
        <begin position="65"/>
        <end position="72"/>
    </location>
    <ligand>
        <name>ATP</name>
        <dbReference type="ChEBI" id="CHEBI:30616"/>
    </ligand>
</feature>
<proteinExistence type="inferred from homology"/>
<evidence type="ECO:0000255" key="1">
    <source>
        <dbReference type="HAMAP-Rule" id="MF_01543"/>
    </source>
</evidence>
<name>FTHS_STRE4</name>
<gene>
    <name evidence="1" type="primary">fhs</name>
    <name type="ordered locus">SEQ_1075</name>
</gene>
<organism>
    <name type="scientific">Streptococcus equi subsp. equi (strain 4047)</name>
    <dbReference type="NCBI Taxonomy" id="553482"/>
    <lineage>
        <taxon>Bacteria</taxon>
        <taxon>Bacillati</taxon>
        <taxon>Bacillota</taxon>
        <taxon>Bacilli</taxon>
        <taxon>Lactobacillales</taxon>
        <taxon>Streptococcaceae</taxon>
        <taxon>Streptococcus</taxon>
    </lineage>
</organism>
<protein>
    <recommendedName>
        <fullName evidence="1">Formate--tetrahydrofolate ligase</fullName>
        <ecNumber evidence="1">6.3.4.3</ecNumber>
    </recommendedName>
    <alternativeName>
        <fullName evidence="1">Formyltetrahydrofolate synthetase</fullName>
        <shortName evidence="1">FHS</shortName>
        <shortName evidence="1">FTHFS</shortName>
    </alternativeName>
</protein>
<sequence length="556" mass="59518">MKSDIEIAQSVPLKPITEIVKKVGIDADDLELYGNYKAKLSFEKIKSVEDNKPGKLILVTAINPTPAGEGKSTMSIGLADALTKIGKKTMLALREPSLGPVMGIKGGAAGGGYAQVLPMEDINLHFTGDMHAITTAHNALSALIDNHLQQGNELGIDPRRIIWKRVLDLNDRSLRQVIVGLGSPVNGVPREDGFDITVASEVMAILCLATDLKDLKARLANIVIAYRYDKSPVYVRDLKVEGALALILKDAIKPNLVQTIYGTPAFVHGGPFANIAHGCNSVLATSTALRLADYTVTEAGFGADLGAEKFLNIKTPNLPKAPDAVVIVATLRALKMHGGVAKADLTFENTAAVRSGFANLKRHVENIRKFNIPIVVAINEFVTDTKAEIQVLKELCAEIAVPVELASVWAKGADGGIALANAVVKAITEESAAYKRLYADKDSLEEKLKAIVTEIYGGRAVQFGPKAKNQLKQFAQFGWDQLPVCMAKTQYSFSDDPSLLGAPDQFDITIRELVPKTGAGFIVALTGDVMTMPGLPKIPAAMKMDVTEDGTAVGLF</sequence>
<keyword id="KW-0067">ATP-binding</keyword>
<keyword id="KW-0436">Ligase</keyword>
<keyword id="KW-0547">Nucleotide-binding</keyword>
<keyword id="KW-0554">One-carbon metabolism</keyword>
<reference key="1">
    <citation type="journal article" date="2009" name="PLoS Pathog.">
        <title>Genomic evidence for the evolution of Streptococcus equi: host restriction, increased virulence, and genetic exchange with human pathogens.</title>
        <authorList>
            <person name="Holden M.T.G."/>
            <person name="Heather Z."/>
            <person name="Paillot R."/>
            <person name="Steward K.F."/>
            <person name="Webb K."/>
            <person name="Ainslie F."/>
            <person name="Jourdan T."/>
            <person name="Bason N.C."/>
            <person name="Holroyd N.E."/>
            <person name="Mungall K."/>
            <person name="Quail M.A."/>
            <person name="Sanders M."/>
            <person name="Simmonds M."/>
            <person name="Willey D."/>
            <person name="Brooks K."/>
            <person name="Aanensen D.M."/>
            <person name="Spratt B.G."/>
            <person name="Jolley K.A."/>
            <person name="Maiden M.C.J."/>
            <person name="Kehoe M."/>
            <person name="Chanter N."/>
            <person name="Bentley S.D."/>
            <person name="Robinson C."/>
            <person name="Maskell D.J."/>
            <person name="Parkhill J."/>
            <person name="Waller A.S."/>
        </authorList>
    </citation>
    <scope>NUCLEOTIDE SEQUENCE [LARGE SCALE GENOMIC DNA]</scope>
    <source>
        <strain>4047</strain>
    </source>
</reference>
<comment type="catalytic activity">
    <reaction evidence="1">
        <text>(6S)-5,6,7,8-tetrahydrofolate + formate + ATP = (6R)-10-formyltetrahydrofolate + ADP + phosphate</text>
        <dbReference type="Rhea" id="RHEA:20221"/>
        <dbReference type="ChEBI" id="CHEBI:15740"/>
        <dbReference type="ChEBI" id="CHEBI:30616"/>
        <dbReference type="ChEBI" id="CHEBI:43474"/>
        <dbReference type="ChEBI" id="CHEBI:57453"/>
        <dbReference type="ChEBI" id="CHEBI:195366"/>
        <dbReference type="ChEBI" id="CHEBI:456216"/>
        <dbReference type="EC" id="6.3.4.3"/>
    </reaction>
</comment>
<comment type="pathway">
    <text evidence="1">One-carbon metabolism; tetrahydrofolate interconversion.</text>
</comment>
<comment type="similarity">
    <text evidence="1">Belongs to the formate--tetrahydrofolate ligase family.</text>
</comment>